<protein>
    <recommendedName>
        <fullName evidence="1">Protein ApaG</fullName>
    </recommendedName>
</protein>
<organism>
    <name type="scientific">Rhizobium meliloti (strain 1021)</name>
    <name type="common">Ensifer meliloti</name>
    <name type="synonym">Sinorhizobium meliloti</name>
    <dbReference type="NCBI Taxonomy" id="266834"/>
    <lineage>
        <taxon>Bacteria</taxon>
        <taxon>Pseudomonadati</taxon>
        <taxon>Pseudomonadota</taxon>
        <taxon>Alphaproteobacteria</taxon>
        <taxon>Hyphomicrobiales</taxon>
        <taxon>Rhizobiaceae</taxon>
        <taxon>Sinorhizobium/Ensifer group</taxon>
        <taxon>Sinorhizobium</taxon>
    </lineage>
</organism>
<dbReference type="EMBL" id="AL591688">
    <property type="protein sequence ID" value="CAC45092.1"/>
    <property type="molecule type" value="Genomic_DNA"/>
</dbReference>
<dbReference type="RefSeq" id="NP_384626.1">
    <property type="nucleotide sequence ID" value="NC_003047.1"/>
</dbReference>
<dbReference type="RefSeq" id="WP_003530166.1">
    <property type="nucleotide sequence ID" value="NC_003047.1"/>
</dbReference>
<dbReference type="SMR" id="Q92S97"/>
<dbReference type="EnsemblBacteria" id="CAC45092">
    <property type="protein sequence ID" value="CAC45092"/>
    <property type="gene ID" value="SMc02135"/>
</dbReference>
<dbReference type="GeneID" id="89574840"/>
<dbReference type="KEGG" id="sme:SMc02135"/>
<dbReference type="PATRIC" id="fig|266834.11.peg.1893"/>
<dbReference type="eggNOG" id="COG2967">
    <property type="taxonomic scope" value="Bacteria"/>
</dbReference>
<dbReference type="HOGENOM" id="CLU_128074_1_0_5"/>
<dbReference type="OrthoDB" id="9795226at2"/>
<dbReference type="Proteomes" id="UP000001976">
    <property type="component" value="Chromosome"/>
</dbReference>
<dbReference type="GO" id="GO:0070987">
    <property type="term" value="P:error-free translesion synthesis"/>
    <property type="evidence" value="ECO:0007669"/>
    <property type="project" value="TreeGrafter"/>
</dbReference>
<dbReference type="Gene3D" id="2.60.40.1470">
    <property type="entry name" value="ApaG domain"/>
    <property type="match status" value="1"/>
</dbReference>
<dbReference type="HAMAP" id="MF_00791">
    <property type="entry name" value="ApaG"/>
    <property type="match status" value="1"/>
</dbReference>
<dbReference type="InterPro" id="IPR007474">
    <property type="entry name" value="ApaG_domain"/>
</dbReference>
<dbReference type="InterPro" id="IPR036767">
    <property type="entry name" value="ApaG_sf"/>
</dbReference>
<dbReference type="InterPro" id="IPR023065">
    <property type="entry name" value="Uncharacterised_ApaG"/>
</dbReference>
<dbReference type="NCBIfam" id="NF003967">
    <property type="entry name" value="PRK05461.1"/>
    <property type="match status" value="1"/>
</dbReference>
<dbReference type="PANTHER" id="PTHR14289">
    <property type="entry name" value="F-BOX ONLY PROTEIN 3"/>
    <property type="match status" value="1"/>
</dbReference>
<dbReference type="PANTHER" id="PTHR14289:SF16">
    <property type="entry name" value="POLYMERASE DELTA-INTERACTING PROTEIN 2"/>
    <property type="match status" value="1"/>
</dbReference>
<dbReference type="Pfam" id="PF04379">
    <property type="entry name" value="DUF525"/>
    <property type="match status" value="1"/>
</dbReference>
<dbReference type="SUPFAM" id="SSF110069">
    <property type="entry name" value="ApaG-like"/>
    <property type="match status" value="1"/>
</dbReference>
<dbReference type="PROSITE" id="PS51087">
    <property type="entry name" value="APAG"/>
    <property type="match status" value="1"/>
</dbReference>
<feature type="chain" id="PRO_0000197959" description="Protein ApaG">
    <location>
        <begin position="1"/>
        <end position="130"/>
    </location>
</feature>
<feature type="domain" description="ApaG" evidence="1">
    <location>
        <begin position="3"/>
        <end position="127"/>
    </location>
</feature>
<name>APAG_RHIME</name>
<sequence>MYRALTRDIEVTVEPYYLEEQSDPDDSRYVWGYRIIIANHSGLAVRLMTRYWHITDENGQVDEVSGPGVIGEQPLLNPGDTYEYSSGCPLDTPSGVMFGHYSMEAEGGETFDVAIPAFSLDSPGLVRTLN</sequence>
<proteinExistence type="inferred from homology"/>
<evidence type="ECO:0000255" key="1">
    <source>
        <dbReference type="HAMAP-Rule" id="MF_00791"/>
    </source>
</evidence>
<gene>
    <name evidence="1" type="primary">apaG</name>
    <name type="ordered locus">R00520</name>
    <name type="ORF">SMc02135</name>
</gene>
<accession>Q92S97</accession>
<reference key="1">
    <citation type="journal article" date="2001" name="Proc. Natl. Acad. Sci. U.S.A.">
        <title>Analysis of the chromosome sequence of the legume symbiont Sinorhizobium meliloti strain 1021.</title>
        <authorList>
            <person name="Capela D."/>
            <person name="Barloy-Hubler F."/>
            <person name="Gouzy J."/>
            <person name="Bothe G."/>
            <person name="Ampe F."/>
            <person name="Batut J."/>
            <person name="Boistard P."/>
            <person name="Becker A."/>
            <person name="Boutry M."/>
            <person name="Cadieu E."/>
            <person name="Dreano S."/>
            <person name="Gloux S."/>
            <person name="Godrie T."/>
            <person name="Goffeau A."/>
            <person name="Kahn D."/>
            <person name="Kiss E."/>
            <person name="Lelaure V."/>
            <person name="Masuy D."/>
            <person name="Pohl T."/>
            <person name="Portetelle D."/>
            <person name="Puehler A."/>
            <person name="Purnelle B."/>
            <person name="Ramsperger U."/>
            <person name="Renard C."/>
            <person name="Thebault P."/>
            <person name="Vandenbol M."/>
            <person name="Weidner S."/>
            <person name="Galibert F."/>
        </authorList>
    </citation>
    <scope>NUCLEOTIDE SEQUENCE [LARGE SCALE GENOMIC DNA]</scope>
    <source>
        <strain>1021</strain>
    </source>
</reference>
<reference key="2">
    <citation type="journal article" date="2001" name="Science">
        <title>The composite genome of the legume symbiont Sinorhizobium meliloti.</title>
        <authorList>
            <person name="Galibert F."/>
            <person name="Finan T.M."/>
            <person name="Long S.R."/>
            <person name="Puehler A."/>
            <person name="Abola P."/>
            <person name="Ampe F."/>
            <person name="Barloy-Hubler F."/>
            <person name="Barnett M.J."/>
            <person name="Becker A."/>
            <person name="Boistard P."/>
            <person name="Bothe G."/>
            <person name="Boutry M."/>
            <person name="Bowser L."/>
            <person name="Buhrmester J."/>
            <person name="Cadieu E."/>
            <person name="Capela D."/>
            <person name="Chain P."/>
            <person name="Cowie A."/>
            <person name="Davis R.W."/>
            <person name="Dreano S."/>
            <person name="Federspiel N.A."/>
            <person name="Fisher R.F."/>
            <person name="Gloux S."/>
            <person name="Godrie T."/>
            <person name="Goffeau A."/>
            <person name="Golding B."/>
            <person name="Gouzy J."/>
            <person name="Gurjal M."/>
            <person name="Hernandez-Lucas I."/>
            <person name="Hong A."/>
            <person name="Huizar L."/>
            <person name="Hyman R.W."/>
            <person name="Jones T."/>
            <person name="Kahn D."/>
            <person name="Kahn M.L."/>
            <person name="Kalman S."/>
            <person name="Keating D.H."/>
            <person name="Kiss E."/>
            <person name="Komp C."/>
            <person name="Lelaure V."/>
            <person name="Masuy D."/>
            <person name="Palm C."/>
            <person name="Peck M.C."/>
            <person name="Pohl T.M."/>
            <person name="Portetelle D."/>
            <person name="Purnelle B."/>
            <person name="Ramsperger U."/>
            <person name="Surzycki R."/>
            <person name="Thebault P."/>
            <person name="Vandenbol M."/>
            <person name="Vorhoelter F.J."/>
            <person name="Weidner S."/>
            <person name="Wells D.H."/>
            <person name="Wong K."/>
            <person name="Yeh K.-C."/>
            <person name="Batut J."/>
        </authorList>
    </citation>
    <scope>NUCLEOTIDE SEQUENCE [LARGE SCALE GENOMIC DNA]</scope>
    <source>
        <strain>1021</strain>
    </source>
</reference>
<keyword id="KW-1185">Reference proteome</keyword>